<sequence length="222" mass="25258">MKNNAQLLMPREKMLKFGISALTDVELLALFLRTGTRGKDVLTLAKEMLENFGSLYGLLTSEYEQFSGVHGIGVAKFAQLKGIAELARRYYNVRMREESPLLSPEMTREFLQSQLTGEEREIFMVIFLDSQHRVITHSRLFSGTLNHVEVHPREIIREAIKINASALILAHNHPSGCAEPSKADKLITERIIKSCQFMDLRVLDHIVIGRGEYVSFAERGWI</sequence>
<accession>B1LK75</accession>
<keyword id="KW-0378">Hydrolase</keyword>
<keyword id="KW-0479">Metal-binding</keyword>
<keyword id="KW-0482">Metalloprotease</keyword>
<keyword id="KW-0645">Protease</keyword>
<keyword id="KW-0862">Zinc</keyword>
<name>YICR_ECOSM</name>
<reference key="1">
    <citation type="journal article" date="2008" name="J. Bacteriol.">
        <title>Insights into the environmental resistance gene pool from the genome sequence of the multidrug-resistant environmental isolate Escherichia coli SMS-3-5.</title>
        <authorList>
            <person name="Fricke W.F."/>
            <person name="Wright M.S."/>
            <person name="Lindell A.H."/>
            <person name="Harkins D.M."/>
            <person name="Baker-Austin C."/>
            <person name="Ravel J."/>
            <person name="Stepanauskas R."/>
        </authorList>
    </citation>
    <scope>NUCLEOTIDE SEQUENCE [LARGE SCALE GENOMIC DNA]</scope>
    <source>
        <strain>SMS-3-5 / SECEC</strain>
    </source>
</reference>
<gene>
    <name evidence="1" type="primary">yicR</name>
    <name type="ordered locus">EcSMS35_3973</name>
</gene>
<evidence type="ECO:0000255" key="1">
    <source>
        <dbReference type="HAMAP-Rule" id="MF_00018"/>
    </source>
</evidence>
<evidence type="ECO:0000255" key="2">
    <source>
        <dbReference type="PROSITE-ProRule" id="PRU01182"/>
    </source>
</evidence>
<proteinExistence type="inferred from homology"/>
<protein>
    <recommendedName>
        <fullName evidence="1">UPF0758 protein YicR</fullName>
    </recommendedName>
</protein>
<organism>
    <name type="scientific">Escherichia coli (strain SMS-3-5 / SECEC)</name>
    <dbReference type="NCBI Taxonomy" id="439855"/>
    <lineage>
        <taxon>Bacteria</taxon>
        <taxon>Pseudomonadati</taxon>
        <taxon>Pseudomonadota</taxon>
        <taxon>Gammaproteobacteria</taxon>
        <taxon>Enterobacterales</taxon>
        <taxon>Enterobacteriaceae</taxon>
        <taxon>Escherichia</taxon>
    </lineage>
</organism>
<comment type="similarity">
    <text evidence="1">Belongs to the UPF0758 family. YicR subfamily.</text>
</comment>
<feature type="chain" id="PRO_1000116358" description="UPF0758 protein YicR">
    <location>
        <begin position="1"/>
        <end position="222"/>
    </location>
</feature>
<feature type="domain" description="MPN" evidence="2">
    <location>
        <begin position="100"/>
        <end position="222"/>
    </location>
</feature>
<feature type="short sequence motif" description="JAMM motif" evidence="2">
    <location>
        <begin position="171"/>
        <end position="184"/>
    </location>
</feature>
<feature type="binding site" evidence="2">
    <location>
        <position position="171"/>
    </location>
    <ligand>
        <name>Zn(2+)</name>
        <dbReference type="ChEBI" id="CHEBI:29105"/>
        <note>catalytic</note>
    </ligand>
</feature>
<feature type="binding site" evidence="2">
    <location>
        <position position="173"/>
    </location>
    <ligand>
        <name>Zn(2+)</name>
        <dbReference type="ChEBI" id="CHEBI:29105"/>
        <note>catalytic</note>
    </ligand>
</feature>
<feature type="binding site" evidence="2">
    <location>
        <position position="184"/>
    </location>
    <ligand>
        <name>Zn(2+)</name>
        <dbReference type="ChEBI" id="CHEBI:29105"/>
        <note>catalytic</note>
    </ligand>
</feature>
<dbReference type="EMBL" id="CP000970">
    <property type="protein sequence ID" value="ACB17992.1"/>
    <property type="molecule type" value="Genomic_DNA"/>
</dbReference>
<dbReference type="SMR" id="B1LK75"/>
<dbReference type="KEGG" id="ecm:EcSMS35_3973"/>
<dbReference type="HOGENOM" id="CLU_073529_0_1_6"/>
<dbReference type="Proteomes" id="UP000007011">
    <property type="component" value="Chromosome"/>
</dbReference>
<dbReference type="GO" id="GO:0046872">
    <property type="term" value="F:metal ion binding"/>
    <property type="evidence" value="ECO:0007669"/>
    <property type="project" value="UniProtKB-KW"/>
</dbReference>
<dbReference type="GO" id="GO:0008237">
    <property type="term" value="F:metallopeptidase activity"/>
    <property type="evidence" value="ECO:0007669"/>
    <property type="project" value="UniProtKB-KW"/>
</dbReference>
<dbReference type="GO" id="GO:0006508">
    <property type="term" value="P:proteolysis"/>
    <property type="evidence" value="ECO:0007669"/>
    <property type="project" value="UniProtKB-KW"/>
</dbReference>
<dbReference type="CDD" id="cd08071">
    <property type="entry name" value="MPN_DUF2466"/>
    <property type="match status" value="1"/>
</dbReference>
<dbReference type="Gene3D" id="3.40.140.10">
    <property type="entry name" value="Cytidine Deaminase, domain 2"/>
    <property type="match status" value="1"/>
</dbReference>
<dbReference type="HAMAP" id="MF_00018">
    <property type="entry name" value="UPF0758_YicR"/>
    <property type="match status" value="1"/>
</dbReference>
<dbReference type="InterPro" id="IPR037518">
    <property type="entry name" value="MPN"/>
</dbReference>
<dbReference type="InterPro" id="IPR025657">
    <property type="entry name" value="RadC_JAB"/>
</dbReference>
<dbReference type="InterPro" id="IPR010994">
    <property type="entry name" value="RuvA_2-like"/>
</dbReference>
<dbReference type="InterPro" id="IPR001405">
    <property type="entry name" value="UPF0758"/>
</dbReference>
<dbReference type="InterPro" id="IPR020891">
    <property type="entry name" value="UPF0758_CS"/>
</dbReference>
<dbReference type="InterPro" id="IPR046778">
    <property type="entry name" value="UPF0758_N"/>
</dbReference>
<dbReference type="InterPro" id="IPR022820">
    <property type="entry name" value="UPF0758_YicR"/>
</dbReference>
<dbReference type="NCBIfam" id="NF000642">
    <property type="entry name" value="PRK00024.1"/>
    <property type="match status" value="1"/>
</dbReference>
<dbReference type="NCBIfam" id="TIGR00608">
    <property type="entry name" value="radc"/>
    <property type="match status" value="1"/>
</dbReference>
<dbReference type="PANTHER" id="PTHR30471">
    <property type="entry name" value="DNA REPAIR PROTEIN RADC"/>
    <property type="match status" value="1"/>
</dbReference>
<dbReference type="PANTHER" id="PTHR30471:SF3">
    <property type="entry name" value="UPF0758 PROTEIN YEES-RELATED"/>
    <property type="match status" value="1"/>
</dbReference>
<dbReference type="Pfam" id="PF04002">
    <property type="entry name" value="RadC"/>
    <property type="match status" value="1"/>
</dbReference>
<dbReference type="Pfam" id="PF20582">
    <property type="entry name" value="UPF0758_N"/>
    <property type="match status" value="1"/>
</dbReference>
<dbReference type="SUPFAM" id="SSF47781">
    <property type="entry name" value="RuvA domain 2-like"/>
    <property type="match status" value="1"/>
</dbReference>
<dbReference type="PROSITE" id="PS50249">
    <property type="entry name" value="MPN"/>
    <property type="match status" value="1"/>
</dbReference>
<dbReference type="PROSITE" id="PS01302">
    <property type="entry name" value="UPF0758"/>
    <property type="match status" value="1"/>
</dbReference>